<name>HLDE_SHIB3</name>
<sequence length="477" mass="51041">MKVTLSEFERAGVMVVGDVMLDRYWYGPTSRISPEAPVPVVKVNTIEERPGGAANVAMNIASLGANARLVGLTGIDDAARALSKSLADVNVKCDFVSVPTHPTITKLRVLSRNQQLIRLDFEEGFEGVDPQPLHERINQALSSIGALVLSDYAKGALASVQQMIQLARKAGVPVLIDPKGTDFERYRGATLLTPNLSEFEAVVGKCKTEEEIVERGMKLIADYELSALLVTRSEQGMSLLQPGKAPLHMPTQAQEVYDVTGAGDTVIGVLAATLAAGNSLEEACFFANAAAGVVVGKLGTSTVSPIELENAVRGRADTGFGVMTEEELKLAVAAARKRGEKVVMTNGVFDILHAGHVSYLANARKLGDRLIVAVNSDASTKRLKGDSRPVNPLEQRMIVLGALEAVDWVVSFEEDTPQRLIAGILPDLLVKGGDYKPEEIAGSKEVWANGGEVLVLNFEDGCSTTNIIKKIQQDKKG</sequence>
<reference key="1">
    <citation type="submission" date="2008-05" db="EMBL/GenBank/DDBJ databases">
        <title>Complete sequence of Shigella boydii serotype 18 strain BS512.</title>
        <authorList>
            <person name="Rasko D.A."/>
            <person name="Rosovitz M."/>
            <person name="Maurelli A.T."/>
            <person name="Myers G."/>
            <person name="Seshadri R."/>
            <person name="Cer R."/>
            <person name="Jiang L."/>
            <person name="Ravel J."/>
            <person name="Sebastian Y."/>
        </authorList>
    </citation>
    <scope>NUCLEOTIDE SEQUENCE [LARGE SCALE GENOMIC DNA]</scope>
    <source>
        <strain>CDC 3083-94 / BS512</strain>
    </source>
</reference>
<comment type="function">
    <text evidence="1">Catalyzes the phosphorylation of D-glycero-D-manno-heptose 7-phosphate at the C-1 position to selectively form D-glycero-beta-D-manno-heptose-1,7-bisphosphate.</text>
</comment>
<comment type="function">
    <text evidence="1">Catalyzes the ADP transfer from ATP to D-glycero-beta-D-manno-heptose 1-phosphate, yielding ADP-D-glycero-beta-D-manno-heptose.</text>
</comment>
<comment type="catalytic activity">
    <reaction evidence="1">
        <text>D-glycero-beta-D-manno-heptose 7-phosphate + ATP = D-glycero-beta-D-manno-heptose 1,7-bisphosphate + ADP + H(+)</text>
        <dbReference type="Rhea" id="RHEA:27473"/>
        <dbReference type="ChEBI" id="CHEBI:15378"/>
        <dbReference type="ChEBI" id="CHEBI:30616"/>
        <dbReference type="ChEBI" id="CHEBI:60204"/>
        <dbReference type="ChEBI" id="CHEBI:60208"/>
        <dbReference type="ChEBI" id="CHEBI:456216"/>
        <dbReference type="EC" id="2.7.1.167"/>
    </reaction>
</comment>
<comment type="catalytic activity">
    <reaction evidence="1">
        <text>D-glycero-beta-D-manno-heptose 1-phosphate + ATP + H(+) = ADP-D-glycero-beta-D-manno-heptose + diphosphate</text>
        <dbReference type="Rhea" id="RHEA:27465"/>
        <dbReference type="ChEBI" id="CHEBI:15378"/>
        <dbReference type="ChEBI" id="CHEBI:30616"/>
        <dbReference type="ChEBI" id="CHEBI:33019"/>
        <dbReference type="ChEBI" id="CHEBI:59967"/>
        <dbReference type="ChEBI" id="CHEBI:61593"/>
        <dbReference type="EC" id="2.7.7.70"/>
    </reaction>
</comment>
<comment type="pathway">
    <text evidence="1">Nucleotide-sugar biosynthesis; ADP-L-glycero-beta-D-manno-heptose biosynthesis; ADP-L-glycero-beta-D-manno-heptose from D-glycero-beta-D-manno-heptose 7-phosphate: step 1/4.</text>
</comment>
<comment type="pathway">
    <text evidence="1">Nucleotide-sugar biosynthesis; ADP-L-glycero-beta-D-manno-heptose biosynthesis; ADP-L-glycero-beta-D-manno-heptose from D-glycero-beta-D-manno-heptose 7-phosphate: step 3/4.</text>
</comment>
<comment type="subunit">
    <text evidence="1">Homodimer.</text>
</comment>
<comment type="similarity">
    <text evidence="1">In the N-terminal section; belongs to the carbohydrate kinase PfkB family.</text>
</comment>
<comment type="similarity">
    <text evidence="1">In the C-terminal section; belongs to the cytidylyltransferase family.</text>
</comment>
<gene>
    <name evidence="1" type="primary">hldE</name>
    <name type="ordered locus">SbBS512_E3483</name>
</gene>
<dbReference type="EC" id="2.7.1.167" evidence="1"/>
<dbReference type="EC" id="2.7.7.70" evidence="1"/>
<dbReference type="EMBL" id="CP001063">
    <property type="protein sequence ID" value="ACD09939.1"/>
    <property type="molecule type" value="Genomic_DNA"/>
</dbReference>
<dbReference type="RefSeq" id="WP_000869227.1">
    <property type="nucleotide sequence ID" value="NC_010658.1"/>
</dbReference>
<dbReference type="SMR" id="B2U1F7"/>
<dbReference type="STRING" id="344609.SbBS512_E3483"/>
<dbReference type="KEGG" id="sbc:SbBS512_E3483"/>
<dbReference type="HOGENOM" id="CLU_021150_2_1_6"/>
<dbReference type="UniPathway" id="UPA00356">
    <property type="reaction ID" value="UER00437"/>
</dbReference>
<dbReference type="UniPathway" id="UPA00356">
    <property type="reaction ID" value="UER00439"/>
</dbReference>
<dbReference type="Proteomes" id="UP000001030">
    <property type="component" value="Chromosome"/>
</dbReference>
<dbReference type="GO" id="GO:0005829">
    <property type="term" value="C:cytosol"/>
    <property type="evidence" value="ECO:0007669"/>
    <property type="project" value="TreeGrafter"/>
</dbReference>
<dbReference type="GO" id="GO:0005524">
    <property type="term" value="F:ATP binding"/>
    <property type="evidence" value="ECO:0007669"/>
    <property type="project" value="UniProtKB-UniRule"/>
</dbReference>
<dbReference type="GO" id="GO:0033785">
    <property type="term" value="F:heptose 7-phosphate kinase activity"/>
    <property type="evidence" value="ECO:0007669"/>
    <property type="project" value="UniProtKB-UniRule"/>
</dbReference>
<dbReference type="GO" id="GO:0033786">
    <property type="term" value="F:heptose-1-phosphate adenylyltransferase activity"/>
    <property type="evidence" value="ECO:0007669"/>
    <property type="project" value="UniProtKB-UniRule"/>
</dbReference>
<dbReference type="GO" id="GO:0016773">
    <property type="term" value="F:phosphotransferase activity, alcohol group as acceptor"/>
    <property type="evidence" value="ECO:0007669"/>
    <property type="project" value="InterPro"/>
</dbReference>
<dbReference type="GO" id="GO:0097171">
    <property type="term" value="P:ADP-L-glycero-beta-D-manno-heptose biosynthetic process"/>
    <property type="evidence" value="ECO:0007669"/>
    <property type="project" value="UniProtKB-UniPathway"/>
</dbReference>
<dbReference type="CDD" id="cd01172">
    <property type="entry name" value="RfaE_like"/>
    <property type="match status" value="1"/>
</dbReference>
<dbReference type="FunFam" id="3.40.1190.20:FF:000002">
    <property type="entry name" value="Bifunctional protein HldE"/>
    <property type="match status" value="1"/>
</dbReference>
<dbReference type="FunFam" id="3.40.50.620:FF:000028">
    <property type="entry name" value="Bifunctional protein HldE"/>
    <property type="match status" value="1"/>
</dbReference>
<dbReference type="Gene3D" id="3.40.1190.20">
    <property type="match status" value="1"/>
</dbReference>
<dbReference type="Gene3D" id="3.40.50.620">
    <property type="entry name" value="HUPs"/>
    <property type="match status" value="1"/>
</dbReference>
<dbReference type="HAMAP" id="MF_01603">
    <property type="entry name" value="HldE"/>
    <property type="match status" value="1"/>
</dbReference>
<dbReference type="InterPro" id="IPR023030">
    <property type="entry name" value="Bifunc_HldE"/>
</dbReference>
<dbReference type="InterPro" id="IPR002173">
    <property type="entry name" value="Carboh/pur_kinase_PfkB_CS"/>
</dbReference>
<dbReference type="InterPro" id="IPR004821">
    <property type="entry name" value="Cyt_trans-like"/>
</dbReference>
<dbReference type="InterPro" id="IPR011611">
    <property type="entry name" value="PfkB_dom"/>
</dbReference>
<dbReference type="InterPro" id="IPR011913">
    <property type="entry name" value="RfaE_dom_I"/>
</dbReference>
<dbReference type="InterPro" id="IPR011914">
    <property type="entry name" value="RfaE_dom_II"/>
</dbReference>
<dbReference type="InterPro" id="IPR029056">
    <property type="entry name" value="Ribokinase-like"/>
</dbReference>
<dbReference type="InterPro" id="IPR014729">
    <property type="entry name" value="Rossmann-like_a/b/a_fold"/>
</dbReference>
<dbReference type="NCBIfam" id="TIGR00125">
    <property type="entry name" value="cyt_tran_rel"/>
    <property type="match status" value="1"/>
</dbReference>
<dbReference type="NCBIfam" id="NF008454">
    <property type="entry name" value="PRK11316.1"/>
    <property type="match status" value="1"/>
</dbReference>
<dbReference type="NCBIfam" id="TIGR02198">
    <property type="entry name" value="rfaE_dom_I"/>
    <property type="match status" value="1"/>
</dbReference>
<dbReference type="NCBIfam" id="TIGR02199">
    <property type="entry name" value="rfaE_dom_II"/>
    <property type="match status" value="1"/>
</dbReference>
<dbReference type="PANTHER" id="PTHR46969">
    <property type="entry name" value="BIFUNCTIONAL PROTEIN HLDE"/>
    <property type="match status" value="1"/>
</dbReference>
<dbReference type="PANTHER" id="PTHR46969:SF1">
    <property type="entry name" value="BIFUNCTIONAL PROTEIN HLDE"/>
    <property type="match status" value="1"/>
</dbReference>
<dbReference type="Pfam" id="PF01467">
    <property type="entry name" value="CTP_transf_like"/>
    <property type="match status" value="1"/>
</dbReference>
<dbReference type="Pfam" id="PF00294">
    <property type="entry name" value="PfkB"/>
    <property type="match status" value="1"/>
</dbReference>
<dbReference type="SUPFAM" id="SSF52374">
    <property type="entry name" value="Nucleotidylyl transferase"/>
    <property type="match status" value="1"/>
</dbReference>
<dbReference type="SUPFAM" id="SSF53613">
    <property type="entry name" value="Ribokinase-like"/>
    <property type="match status" value="1"/>
</dbReference>
<dbReference type="PROSITE" id="PS00583">
    <property type="entry name" value="PFKB_KINASES_1"/>
    <property type="match status" value="1"/>
</dbReference>
<organism>
    <name type="scientific">Shigella boydii serotype 18 (strain CDC 3083-94 / BS512)</name>
    <dbReference type="NCBI Taxonomy" id="344609"/>
    <lineage>
        <taxon>Bacteria</taxon>
        <taxon>Pseudomonadati</taxon>
        <taxon>Pseudomonadota</taxon>
        <taxon>Gammaproteobacteria</taxon>
        <taxon>Enterobacterales</taxon>
        <taxon>Enterobacteriaceae</taxon>
        <taxon>Shigella</taxon>
    </lineage>
</organism>
<accession>B2U1F7</accession>
<protein>
    <recommendedName>
        <fullName evidence="1">Bifunctional protein HldE</fullName>
    </recommendedName>
    <domain>
        <recommendedName>
            <fullName evidence="1">D-beta-D-heptose 7-phosphate kinase</fullName>
            <ecNumber evidence="1">2.7.1.167</ecNumber>
        </recommendedName>
        <alternativeName>
            <fullName evidence="1">D-beta-D-heptose 7-phosphotransferase</fullName>
        </alternativeName>
        <alternativeName>
            <fullName evidence="1">D-glycero-beta-D-manno-heptose-7-phosphate kinase</fullName>
        </alternativeName>
    </domain>
    <domain>
        <recommendedName>
            <fullName evidence="1">D-beta-D-heptose 1-phosphate adenylyltransferase</fullName>
            <ecNumber evidence="1">2.7.7.70</ecNumber>
        </recommendedName>
        <alternativeName>
            <fullName evidence="1">D-glycero-beta-D-manno-heptose 1-phosphate adenylyltransferase</fullName>
        </alternativeName>
    </domain>
</protein>
<keyword id="KW-0007">Acetylation</keyword>
<keyword id="KW-0067">ATP-binding</keyword>
<keyword id="KW-0119">Carbohydrate metabolism</keyword>
<keyword id="KW-0418">Kinase</keyword>
<keyword id="KW-0511">Multifunctional enzyme</keyword>
<keyword id="KW-0547">Nucleotide-binding</keyword>
<keyword id="KW-0548">Nucleotidyltransferase</keyword>
<keyword id="KW-1185">Reference proteome</keyword>
<keyword id="KW-0808">Transferase</keyword>
<feature type="chain" id="PRO_1000185825" description="Bifunctional protein HldE">
    <location>
        <begin position="1"/>
        <end position="477"/>
    </location>
</feature>
<feature type="region of interest" description="Ribokinase">
    <location>
        <begin position="1"/>
        <end position="318"/>
    </location>
</feature>
<feature type="region of interest" description="Cytidylyltransferase">
    <location>
        <begin position="344"/>
        <end position="477"/>
    </location>
</feature>
<feature type="active site" evidence="1">
    <location>
        <position position="264"/>
    </location>
</feature>
<feature type="binding site" evidence="1">
    <location>
        <begin position="195"/>
        <end position="198"/>
    </location>
    <ligand>
        <name>ATP</name>
        <dbReference type="ChEBI" id="CHEBI:30616"/>
    </ligand>
</feature>
<feature type="modified residue" description="N6-acetyllysine" evidence="1">
    <location>
        <position position="179"/>
    </location>
</feature>
<evidence type="ECO:0000255" key="1">
    <source>
        <dbReference type="HAMAP-Rule" id="MF_01603"/>
    </source>
</evidence>
<proteinExistence type="inferred from homology"/>